<proteinExistence type="inferred from homology"/>
<accession>D8J4S4</accession>
<reference key="1">
    <citation type="journal article" date="2010" name="J. Bacteriol.">
        <title>Complete genome sequence of Halalkalicoccus jeotgali B3(T), an extremely halophilic archaeon.</title>
        <authorList>
            <person name="Roh S.W."/>
            <person name="Nam Y.D."/>
            <person name="Nam S.H."/>
            <person name="Choi S.H."/>
            <person name="Park H.S."/>
            <person name="Bae J.W."/>
        </authorList>
    </citation>
    <scope>NUCLEOTIDE SEQUENCE [LARGE SCALE GENOMIC DNA]</scope>
    <source>
        <strain>DSM 18796 / CECT 7217 / JCM 14584 / KCTC 4019 / B3</strain>
    </source>
</reference>
<organism>
    <name type="scientific">Halalkalicoccus jeotgali (strain DSM 18796 / CECT 7217 / JCM 14584 / KCTC 4019 / B3)</name>
    <dbReference type="NCBI Taxonomy" id="795797"/>
    <lineage>
        <taxon>Archaea</taxon>
        <taxon>Methanobacteriati</taxon>
        <taxon>Methanobacteriota</taxon>
        <taxon>Stenosarchaea group</taxon>
        <taxon>Halobacteria</taxon>
        <taxon>Halobacteriales</taxon>
        <taxon>Halococcaceae</taxon>
        <taxon>Halalkalicoccus</taxon>
    </lineage>
</organism>
<gene>
    <name evidence="1" type="primary">ribL</name>
    <name type="ordered locus">HacjB3_10790</name>
</gene>
<feature type="chain" id="PRO_0000406235" description="FAD synthase">
    <location>
        <begin position="1"/>
        <end position="142"/>
    </location>
</feature>
<feature type="binding site" evidence="1">
    <location>
        <begin position="9"/>
        <end position="10"/>
    </location>
    <ligand>
        <name>ATP</name>
        <dbReference type="ChEBI" id="CHEBI:30616"/>
    </ligand>
</feature>
<feature type="binding site" evidence="1">
    <location>
        <begin position="14"/>
        <end position="17"/>
    </location>
    <ligand>
        <name>ATP</name>
        <dbReference type="ChEBI" id="CHEBI:30616"/>
    </ligand>
</feature>
<feature type="binding site" evidence="1">
    <location>
        <position position="92"/>
    </location>
    <ligand>
        <name>ATP</name>
        <dbReference type="ChEBI" id="CHEBI:30616"/>
    </ligand>
</feature>
<protein>
    <recommendedName>
        <fullName evidence="1">FAD synthase</fullName>
        <ecNumber evidence="1">2.7.7.2</ecNumber>
    </recommendedName>
    <alternativeName>
        <fullName evidence="1">FMN adenylyltransferase</fullName>
    </alternativeName>
    <alternativeName>
        <fullName evidence="1">Flavin adenine dinucleotide synthase</fullName>
    </alternativeName>
</protein>
<evidence type="ECO:0000255" key="1">
    <source>
        <dbReference type="HAMAP-Rule" id="MF_02115"/>
    </source>
</evidence>
<dbReference type="EC" id="2.7.7.2" evidence="1"/>
<dbReference type="EMBL" id="CP002062">
    <property type="protein sequence ID" value="ADJ15541.1"/>
    <property type="molecule type" value="Genomic_DNA"/>
</dbReference>
<dbReference type="RefSeq" id="WP_008416928.1">
    <property type="nucleotide sequence ID" value="NC_014297.1"/>
</dbReference>
<dbReference type="SMR" id="D8J4S4"/>
<dbReference type="STRING" id="795797.HacjB3_10790"/>
<dbReference type="GeneID" id="9419968"/>
<dbReference type="KEGG" id="hje:HacjB3_10790"/>
<dbReference type="eggNOG" id="arCOG01222">
    <property type="taxonomic scope" value="Archaea"/>
</dbReference>
<dbReference type="HOGENOM" id="CLU_034585_2_1_2"/>
<dbReference type="OrthoDB" id="1912at2157"/>
<dbReference type="UniPathway" id="UPA00277">
    <property type="reaction ID" value="UER00407"/>
</dbReference>
<dbReference type="Proteomes" id="UP000000390">
    <property type="component" value="Chromosome"/>
</dbReference>
<dbReference type="GO" id="GO:0005524">
    <property type="term" value="F:ATP binding"/>
    <property type="evidence" value="ECO:0007669"/>
    <property type="project" value="UniProtKB-UniRule"/>
</dbReference>
<dbReference type="GO" id="GO:0003919">
    <property type="term" value="F:FMN adenylyltransferase activity"/>
    <property type="evidence" value="ECO:0007669"/>
    <property type="project" value="UniProtKB-UniRule"/>
</dbReference>
<dbReference type="GO" id="GO:0006747">
    <property type="term" value="P:FAD biosynthetic process"/>
    <property type="evidence" value="ECO:0007669"/>
    <property type="project" value="UniProtKB-UniRule"/>
</dbReference>
<dbReference type="GO" id="GO:0046444">
    <property type="term" value="P:FMN metabolic process"/>
    <property type="evidence" value="ECO:0007669"/>
    <property type="project" value="UniProtKB-UniRule"/>
</dbReference>
<dbReference type="Gene3D" id="3.40.50.620">
    <property type="entry name" value="HUPs"/>
    <property type="match status" value="1"/>
</dbReference>
<dbReference type="HAMAP" id="MF_02115">
    <property type="entry name" value="FAD_synth_arch"/>
    <property type="match status" value="1"/>
</dbReference>
<dbReference type="InterPro" id="IPR050385">
    <property type="entry name" value="Archaeal_FAD_synthase"/>
</dbReference>
<dbReference type="InterPro" id="IPR004821">
    <property type="entry name" value="Cyt_trans-like"/>
</dbReference>
<dbReference type="InterPro" id="IPR024902">
    <property type="entry name" value="FAD_synth_RibL"/>
</dbReference>
<dbReference type="InterPro" id="IPR014729">
    <property type="entry name" value="Rossmann-like_a/b/a_fold"/>
</dbReference>
<dbReference type="NCBIfam" id="TIGR00125">
    <property type="entry name" value="cyt_tran_rel"/>
    <property type="match status" value="1"/>
</dbReference>
<dbReference type="PANTHER" id="PTHR43793">
    <property type="entry name" value="FAD SYNTHASE"/>
    <property type="match status" value="1"/>
</dbReference>
<dbReference type="PANTHER" id="PTHR43793:SF1">
    <property type="entry name" value="FAD SYNTHASE"/>
    <property type="match status" value="1"/>
</dbReference>
<dbReference type="Pfam" id="PF01467">
    <property type="entry name" value="CTP_transf_like"/>
    <property type="match status" value="1"/>
</dbReference>
<dbReference type="SUPFAM" id="SSF52374">
    <property type="entry name" value="Nucleotidylyl transferase"/>
    <property type="match status" value="1"/>
</dbReference>
<comment type="function">
    <text evidence="1">Catalyzes the transfer of the AMP portion of ATP to flavin mononucleotide (FMN) to produce flavin adenine dinucleotide (FAD) coenzyme.</text>
</comment>
<comment type="catalytic activity">
    <reaction evidence="1">
        <text>FMN + ATP + H(+) = FAD + diphosphate</text>
        <dbReference type="Rhea" id="RHEA:17237"/>
        <dbReference type="ChEBI" id="CHEBI:15378"/>
        <dbReference type="ChEBI" id="CHEBI:30616"/>
        <dbReference type="ChEBI" id="CHEBI:33019"/>
        <dbReference type="ChEBI" id="CHEBI:57692"/>
        <dbReference type="ChEBI" id="CHEBI:58210"/>
        <dbReference type="EC" id="2.7.7.2"/>
    </reaction>
</comment>
<comment type="cofactor">
    <cofactor evidence="1">
        <name>a divalent metal cation</name>
        <dbReference type="ChEBI" id="CHEBI:60240"/>
    </cofactor>
</comment>
<comment type="pathway">
    <text evidence="1">Cofactor biosynthesis; FAD biosynthesis; FAD from FMN: step 1/1.</text>
</comment>
<comment type="subunit">
    <text evidence="1">Homodimer.</text>
</comment>
<comment type="similarity">
    <text evidence="1">Belongs to the archaeal FAD synthase family.</text>
</comment>
<name>RIBL_HALJB</name>
<keyword id="KW-0067">ATP-binding</keyword>
<keyword id="KW-0274">FAD</keyword>
<keyword id="KW-0285">Flavoprotein</keyword>
<keyword id="KW-0288">FMN</keyword>
<keyword id="KW-0547">Nucleotide-binding</keyword>
<keyword id="KW-0548">Nucleotidyltransferase</keyword>
<keyword id="KW-0808">Transferase</keyword>
<sequence length="142" mass="15831">MVRALAQGTFDLLHPGHIHYLEEAARMGDELYVIVARSANVTHKRAPVLDGRQRRDMIGALEVVDHALLGHESDIFVPIEEIDPDVIVLGHDQHHDEAAIERALGDRGIDCGVRRASPRDPAYDGELLSTGRIVDRICERRC</sequence>